<accession>P24711</accession>
<protein>
    <recommendedName>
        <fullName>Involucrin</fullName>
    </recommendedName>
</protein>
<evidence type="ECO:0000250" key="1"/>
<evidence type="ECO:0000256" key="2">
    <source>
        <dbReference type="SAM" id="MobiDB-lite"/>
    </source>
</evidence>
<evidence type="ECO:0000305" key="3"/>
<name>INVO_CEPBA</name>
<comment type="function">
    <text>Part of the insoluble cornified cell envelope (CE) of stratified squamous epithelia.</text>
</comment>
<comment type="subunit">
    <text evidence="1">Directly or indirectly cross-linked to cornifelin (CNFN).</text>
</comment>
<comment type="subcellular location">
    <subcellularLocation>
        <location>Cytoplasm</location>
    </subcellularLocation>
    <text>Constituent of the scaffolding of the cornified envelope.</text>
</comment>
<comment type="tissue specificity">
    <text>Keratinocytes of epidermis and other stratified squamous epithelia.</text>
</comment>
<comment type="PTM">
    <text>Substrate of transglutaminase. Specific glutamines or lysines are cross-linked to keratins, desmoplakin and to inter involucrin molecules.</text>
</comment>
<comment type="similarity">
    <text evidence="3">Belongs to the involucrin family.</text>
</comment>
<feature type="chain" id="PRO_0000159745" description="Involucrin">
    <location>
        <begin position="1"/>
        <end position="387"/>
    </location>
</feature>
<feature type="region of interest" description="Disordered" evidence="2">
    <location>
        <begin position="1"/>
        <end position="319"/>
    </location>
</feature>
<feature type="region of interest" description="Disordered" evidence="2">
    <location>
        <begin position="347"/>
        <end position="387"/>
    </location>
</feature>
<feature type="compositionally biased region" description="Polar residues" evidence="2">
    <location>
        <begin position="28"/>
        <end position="37"/>
    </location>
</feature>
<feature type="compositionally biased region" description="Low complexity" evidence="2">
    <location>
        <begin position="62"/>
        <end position="71"/>
    </location>
</feature>
<feature type="compositionally biased region" description="Basic and acidic residues" evidence="2">
    <location>
        <begin position="85"/>
        <end position="96"/>
    </location>
</feature>
<feature type="compositionally biased region" description="Basic and acidic residues" evidence="2">
    <location>
        <begin position="104"/>
        <end position="115"/>
    </location>
</feature>
<feature type="compositionally biased region" description="Basic and acidic residues" evidence="2">
    <location>
        <begin position="147"/>
        <end position="179"/>
    </location>
</feature>
<feature type="compositionally biased region" description="Basic and acidic residues" evidence="2">
    <location>
        <begin position="231"/>
        <end position="245"/>
    </location>
</feature>
<gene>
    <name type="primary">IVL</name>
</gene>
<keyword id="KW-0963">Cytoplasm</keyword>
<keyword id="KW-0417">Keratinization</keyword>
<keyword id="KW-0677">Repeat</keyword>
<organism>
    <name type="scientific">Cephalopachus bancanus</name>
    <name type="common">Western tarsier</name>
    <name type="synonym">Tarsius bancanus</name>
    <dbReference type="NCBI Taxonomy" id="9477"/>
    <lineage>
        <taxon>Eukaryota</taxon>
        <taxon>Metazoa</taxon>
        <taxon>Chordata</taxon>
        <taxon>Craniata</taxon>
        <taxon>Vertebrata</taxon>
        <taxon>Euteleostomi</taxon>
        <taxon>Mammalia</taxon>
        <taxon>Eutheria</taxon>
        <taxon>Euarchontoglires</taxon>
        <taxon>Primates</taxon>
        <taxon>Haplorrhini</taxon>
        <taxon>Tarsiiformes</taxon>
        <taxon>Tarsiidae</taxon>
        <taxon>Cephalopachus</taxon>
    </lineage>
</organism>
<reference key="1">
    <citation type="journal article" date="1991" name="Proc. Natl. Acad. Sci. U.S.A.">
        <title>Involucrin gene of tarsioids and other primates: alternatives in evolution of the segment of repeats.</title>
        <authorList>
            <person name="Djian P."/>
            <person name="Green H."/>
        </authorList>
    </citation>
    <scope>NUCLEOTIDE SEQUENCE [GENOMIC DNA]</scope>
    <source>
        <tissue>Liver</tissue>
    </source>
</reference>
<sequence>MSQQQTLPVTLPPALSQELLKTVPPPANTQQDQMKQPTPSPAPCQKGPSELPVEKHPAPVKQVPEQECEPQQQDHQEPELQLGRKQQEPQEQEVHPGKQQQKPQEQEAHLGKKQEPQGQEVHLGKQQQKTQEQEVHLGKQQQELQEQEVHLEKQLQEPQEVHLEKQLQEQEVHLEKQLQEPEPELNLGKQQQEPQEQEAYLGKQQQELPEPQDPELHLGKQQQEPQEQEVQLEKQQEAQEQELHLGKQQQESQEQELHLRKLQQVPQEPQDQELHLGKQQQELQEQEVHLGKQLQEPQEQELHLGRQQQELQEEEVHLGMKEEQLLKHVEQQEGQLEQQEGQLKQPVCIPTPGQVQDIQPAQPPKGEVLLPTEKQQKQEVQWPLKQE</sequence>
<proteinExistence type="evidence at transcript level"/>
<dbReference type="EMBL" id="M65124">
    <property type="protein sequence ID" value="AAA36960.1"/>
    <property type="molecule type" value="Genomic_DNA"/>
</dbReference>
<dbReference type="PIR" id="A43704">
    <property type="entry name" value="A43704"/>
</dbReference>
<dbReference type="GO" id="GO:0001533">
    <property type="term" value="C:cornified envelope"/>
    <property type="evidence" value="ECO:0007669"/>
    <property type="project" value="InterPro"/>
</dbReference>
<dbReference type="GO" id="GO:0005737">
    <property type="term" value="C:cytoplasm"/>
    <property type="evidence" value="ECO:0007669"/>
    <property type="project" value="UniProtKB-SubCell"/>
</dbReference>
<dbReference type="GO" id="GO:0031424">
    <property type="term" value="P:keratinization"/>
    <property type="evidence" value="ECO:0007669"/>
    <property type="project" value="UniProtKB-KW"/>
</dbReference>
<dbReference type="InterPro" id="IPR009733">
    <property type="entry name" value="Involucrin2"/>
</dbReference>
<dbReference type="InterPro" id="IPR019743">
    <property type="entry name" value="Involucrin_CS"/>
</dbReference>
<dbReference type="InterPro" id="IPR019571">
    <property type="entry name" value="Involucrin_N"/>
</dbReference>
<dbReference type="Pfam" id="PF06994">
    <property type="entry name" value="Involucrin2"/>
    <property type="match status" value="7"/>
</dbReference>
<dbReference type="Pfam" id="PF10583">
    <property type="entry name" value="Involucrin_N"/>
    <property type="match status" value="1"/>
</dbReference>
<dbReference type="PROSITE" id="PS00795">
    <property type="entry name" value="INVOLUCRIN"/>
    <property type="match status" value="1"/>
</dbReference>